<keyword id="KW-0556">Organic radical</keyword>
<accession>A5F5R7</accession>
<accession>C3M484</accession>
<proteinExistence type="inferred from homology"/>
<gene>
    <name evidence="1" type="primary">grcA</name>
    <name type="ordered locus">VC0395_A1940</name>
    <name type="ordered locus">VC395_2476</name>
</gene>
<evidence type="ECO:0000255" key="1">
    <source>
        <dbReference type="HAMAP-Rule" id="MF_00806"/>
    </source>
</evidence>
<name>GRCA_VIBC3</name>
<feature type="chain" id="PRO_1000083738" description="Autonomous glycyl radical cofactor">
    <location>
        <begin position="1"/>
        <end position="125"/>
    </location>
</feature>
<feature type="domain" description="Glycine radical" evidence="1">
    <location>
        <begin position="5"/>
        <end position="125"/>
    </location>
</feature>
<feature type="modified residue" description="Glycine radical" evidence="1">
    <location>
        <position position="100"/>
    </location>
</feature>
<sequence length="125" mass="13910">MIQGIQITKAANDDLLNSIWLLDSEKNEARCVAALKGFEADQVVSINDLGQFESREVAIEAAPRIEGGQHLNVNVLKRETLEDAVAHPEKYPQLTIRVSGYAVRFNSLTAEQQRDVIARTFTESL</sequence>
<organism>
    <name type="scientific">Vibrio cholerae serotype O1 (strain ATCC 39541 / Classical Ogawa 395 / O395)</name>
    <dbReference type="NCBI Taxonomy" id="345073"/>
    <lineage>
        <taxon>Bacteria</taxon>
        <taxon>Pseudomonadati</taxon>
        <taxon>Pseudomonadota</taxon>
        <taxon>Gammaproteobacteria</taxon>
        <taxon>Vibrionales</taxon>
        <taxon>Vibrionaceae</taxon>
        <taxon>Vibrio</taxon>
    </lineage>
</organism>
<dbReference type="EMBL" id="CP000627">
    <property type="protein sequence ID" value="ABQ20661.1"/>
    <property type="molecule type" value="Genomic_DNA"/>
</dbReference>
<dbReference type="EMBL" id="CP001235">
    <property type="protein sequence ID" value="ACP10466.1"/>
    <property type="molecule type" value="Genomic_DNA"/>
</dbReference>
<dbReference type="RefSeq" id="WP_000614136.1">
    <property type="nucleotide sequence ID" value="NZ_JAACZH010000008.1"/>
</dbReference>
<dbReference type="SMR" id="A5F5R7"/>
<dbReference type="GeneID" id="89513655"/>
<dbReference type="KEGG" id="vco:VC0395_A1940"/>
<dbReference type="KEGG" id="vcr:VC395_2476"/>
<dbReference type="PATRIC" id="fig|345073.21.peg.2380"/>
<dbReference type="eggNOG" id="COG3445">
    <property type="taxonomic scope" value="Bacteria"/>
</dbReference>
<dbReference type="HOGENOM" id="CLU_133780_0_0_6"/>
<dbReference type="OrthoDB" id="9803969at2"/>
<dbReference type="Proteomes" id="UP000000249">
    <property type="component" value="Chromosome 2"/>
</dbReference>
<dbReference type="GO" id="GO:0005829">
    <property type="term" value="C:cytosol"/>
    <property type="evidence" value="ECO:0007669"/>
    <property type="project" value="TreeGrafter"/>
</dbReference>
<dbReference type="GO" id="GO:0008861">
    <property type="term" value="F:formate C-acetyltransferase activity"/>
    <property type="evidence" value="ECO:0007669"/>
    <property type="project" value="TreeGrafter"/>
</dbReference>
<dbReference type="FunFam" id="3.20.70.20:FF:000002">
    <property type="entry name" value="Autonomous glycyl radical cofactor"/>
    <property type="match status" value="1"/>
</dbReference>
<dbReference type="Gene3D" id="3.20.70.20">
    <property type="match status" value="1"/>
</dbReference>
<dbReference type="HAMAP" id="MF_00806">
    <property type="entry name" value="GrcA"/>
    <property type="match status" value="1"/>
</dbReference>
<dbReference type="InterPro" id="IPR050244">
    <property type="entry name" value="Auton_GlycylRad_Cofactor"/>
</dbReference>
<dbReference type="InterPro" id="IPR019777">
    <property type="entry name" value="Form_AcTrfase_GR_CS"/>
</dbReference>
<dbReference type="InterPro" id="IPR001150">
    <property type="entry name" value="Gly_radical"/>
</dbReference>
<dbReference type="InterPro" id="IPR011140">
    <property type="entry name" value="Glycyl_radical_cofactor_GrcA"/>
</dbReference>
<dbReference type="NCBIfam" id="TIGR04365">
    <property type="entry name" value="spare_glycyl"/>
    <property type="match status" value="1"/>
</dbReference>
<dbReference type="PANTHER" id="PTHR30191">
    <property type="entry name" value="FORMATE ACETYLTRANSFERASE"/>
    <property type="match status" value="1"/>
</dbReference>
<dbReference type="PANTHER" id="PTHR30191:SF0">
    <property type="entry name" value="FORMATE ACETYLTRANSFERASE 1"/>
    <property type="match status" value="1"/>
</dbReference>
<dbReference type="Pfam" id="PF01228">
    <property type="entry name" value="Gly_radical"/>
    <property type="match status" value="1"/>
</dbReference>
<dbReference type="PIRSF" id="PIRSF000378">
    <property type="entry name" value="Gly_radicl_yfiD"/>
    <property type="match status" value="1"/>
</dbReference>
<dbReference type="SUPFAM" id="SSF51998">
    <property type="entry name" value="PFL-like glycyl radical enzymes"/>
    <property type="match status" value="1"/>
</dbReference>
<dbReference type="PROSITE" id="PS00850">
    <property type="entry name" value="GLY_RADICAL_1"/>
    <property type="match status" value="1"/>
</dbReference>
<dbReference type="PROSITE" id="PS51149">
    <property type="entry name" value="GLY_RADICAL_2"/>
    <property type="match status" value="1"/>
</dbReference>
<reference key="1">
    <citation type="submission" date="2007-03" db="EMBL/GenBank/DDBJ databases">
        <authorList>
            <person name="Heidelberg J."/>
        </authorList>
    </citation>
    <scope>NUCLEOTIDE SEQUENCE [LARGE SCALE GENOMIC DNA]</scope>
    <source>
        <strain>ATCC 39541 / Classical Ogawa 395 / O395</strain>
    </source>
</reference>
<reference key="2">
    <citation type="journal article" date="2008" name="PLoS ONE">
        <title>A recalibrated molecular clock and independent origins for the cholera pandemic clones.</title>
        <authorList>
            <person name="Feng L."/>
            <person name="Reeves P.R."/>
            <person name="Lan R."/>
            <person name="Ren Y."/>
            <person name="Gao C."/>
            <person name="Zhou Z."/>
            <person name="Ren Y."/>
            <person name="Cheng J."/>
            <person name="Wang W."/>
            <person name="Wang J."/>
            <person name="Qian W."/>
            <person name="Li D."/>
            <person name="Wang L."/>
        </authorList>
    </citation>
    <scope>NUCLEOTIDE SEQUENCE [LARGE SCALE GENOMIC DNA]</scope>
    <source>
        <strain>ATCC 39541 / Classical Ogawa 395 / O395</strain>
    </source>
</reference>
<protein>
    <recommendedName>
        <fullName evidence="1">Autonomous glycyl radical cofactor</fullName>
    </recommendedName>
</protein>
<comment type="function">
    <text evidence="1">Acts as a radical domain for damaged PFL and possibly other radical proteins.</text>
</comment>